<name>RNZ_STRT2</name>
<accession>Q5M3Y3</accession>
<reference key="1">
    <citation type="journal article" date="2004" name="Nat. Biotechnol.">
        <title>Complete sequence and comparative genome analysis of the dairy bacterium Streptococcus thermophilus.</title>
        <authorList>
            <person name="Bolotin A."/>
            <person name="Quinquis B."/>
            <person name="Renault P."/>
            <person name="Sorokin A."/>
            <person name="Ehrlich S.D."/>
            <person name="Kulakauskas S."/>
            <person name="Lapidus A."/>
            <person name="Goltsman E."/>
            <person name="Mazur M."/>
            <person name="Pusch G.D."/>
            <person name="Fonstein M."/>
            <person name="Overbeek R."/>
            <person name="Kyprides N."/>
            <person name="Purnelle B."/>
            <person name="Prozzi D."/>
            <person name="Ngui K."/>
            <person name="Masuy D."/>
            <person name="Hancy F."/>
            <person name="Burteau S."/>
            <person name="Boutry M."/>
            <person name="Delcour J."/>
            <person name="Goffeau A."/>
            <person name="Hols P."/>
        </authorList>
    </citation>
    <scope>NUCLEOTIDE SEQUENCE [LARGE SCALE GENOMIC DNA]</scope>
    <source>
        <strain>ATCC BAA-250 / LMG 18311</strain>
    </source>
</reference>
<comment type="function">
    <text evidence="1">Zinc phosphodiesterase, which displays some tRNA 3'-processing endonuclease activity. Probably involved in tRNA maturation, by removing a 3'-trailer from precursor tRNA.</text>
</comment>
<comment type="catalytic activity">
    <reaction evidence="1">
        <text>Endonucleolytic cleavage of RNA, removing extra 3' nucleotides from tRNA precursor, generating 3' termini of tRNAs. A 3'-hydroxy group is left at the tRNA terminus and a 5'-phosphoryl group is left at the trailer molecule.</text>
        <dbReference type="EC" id="3.1.26.11"/>
    </reaction>
</comment>
<comment type="cofactor">
    <cofactor evidence="1">
        <name>Zn(2+)</name>
        <dbReference type="ChEBI" id="CHEBI:29105"/>
    </cofactor>
    <text evidence="1">Binds 2 Zn(2+) ions.</text>
</comment>
<comment type="subunit">
    <text evidence="1">Homodimer.</text>
</comment>
<comment type="similarity">
    <text evidence="1">Belongs to the RNase Z family.</text>
</comment>
<dbReference type="EC" id="3.1.26.11" evidence="1"/>
<dbReference type="EMBL" id="CP000023">
    <property type="protein sequence ID" value="AAV60860.1"/>
    <property type="molecule type" value="Genomic_DNA"/>
</dbReference>
<dbReference type="RefSeq" id="WP_011226135.1">
    <property type="nucleotide sequence ID" value="NC_006448.1"/>
</dbReference>
<dbReference type="SMR" id="Q5M3Y3"/>
<dbReference type="STRING" id="264199.stu1226"/>
<dbReference type="GeneID" id="66899018"/>
<dbReference type="KEGG" id="stl:stu1226"/>
<dbReference type="eggNOG" id="COG1234">
    <property type="taxonomic scope" value="Bacteria"/>
</dbReference>
<dbReference type="HOGENOM" id="CLU_031317_2_0_9"/>
<dbReference type="Proteomes" id="UP000001170">
    <property type="component" value="Chromosome"/>
</dbReference>
<dbReference type="GO" id="GO:0042781">
    <property type="term" value="F:3'-tRNA processing endoribonuclease activity"/>
    <property type="evidence" value="ECO:0007669"/>
    <property type="project" value="UniProtKB-UniRule"/>
</dbReference>
<dbReference type="GO" id="GO:0008270">
    <property type="term" value="F:zinc ion binding"/>
    <property type="evidence" value="ECO:0007669"/>
    <property type="project" value="UniProtKB-UniRule"/>
</dbReference>
<dbReference type="CDD" id="cd07717">
    <property type="entry name" value="RNaseZ_ZiPD-like_MBL-fold"/>
    <property type="match status" value="1"/>
</dbReference>
<dbReference type="FunFam" id="3.60.15.10:FF:000002">
    <property type="entry name" value="Ribonuclease Z"/>
    <property type="match status" value="1"/>
</dbReference>
<dbReference type="Gene3D" id="3.60.15.10">
    <property type="entry name" value="Ribonuclease Z/Hydroxyacylglutathione hydrolase-like"/>
    <property type="match status" value="1"/>
</dbReference>
<dbReference type="HAMAP" id="MF_01818">
    <property type="entry name" value="RNase_Z_BN"/>
    <property type="match status" value="1"/>
</dbReference>
<dbReference type="InterPro" id="IPR001279">
    <property type="entry name" value="Metallo-B-lactamas"/>
</dbReference>
<dbReference type="InterPro" id="IPR036866">
    <property type="entry name" value="RibonucZ/Hydroxyglut_hydro"/>
</dbReference>
<dbReference type="InterPro" id="IPR013471">
    <property type="entry name" value="RNase_Z/BN"/>
</dbReference>
<dbReference type="NCBIfam" id="NF000801">
    <property type="entry name" value="PRK00055.1-3"/>
    <property type="match status" value="1"/>
</dbReference>
<dbReference type="NCBIfam" id="TIGR02651">
    <property type="entry name" value="RNase_Z"/>
    <property type="match status" value="1"/>
</dbReference>
<dbReference type="PANTHER" id="PTHR46018">
    <property type="entry name" value="ZINC PHOSPHODIESTERASE ELAC PROTEIN 1"/>
    <property type="match status" value="1"/>
</dbReference>
<dbReference type="PANTHER" id="PTHR46018:SF2">
    <property type="entry name" value="ZINC PHOSPHODIESTERASE ELAC PROTEIN 1"/>
    <property type="match status" value="1"/>
</dbReference>
<dbReference type="Pfam" id="PF00753">
    <property type="entry name" value="Lactamase_B"/>
    <property type="match status" value="1"/>
</dbReference>
<dbReference type="SUPFAM" id="SSF56281">
    <property type="entry name" value="Metallo-hydrolase/oxidoreductase"/>
    <property type="match status" value="1"/>
</dbReference>
<sequence>MELQFLGTGAGQPSKARNVSSLVLKLLDEINEVWMFDCGEGTQRQILETTIKPRKVKKIFITHMHGDHIFGLPGFLASRSFQSSEEQTDLEVYGPVGIKQYVMTSIRTSGTRLSYHVHFKEIDENSLGLVMEDDKFAVYADKLDHTIFCVGYRVVQKDLEGTLDAEALKAAGVPFGPLFGQIKNGQDVVLEDGTKIIAKDFISAPKKGKVITILGDTRKTNASVRLGLGADVLVHESTYGKGDEKIAKSHGHSTNMQAAQVARDASAKRLLLNHVSARFLGRDIGKMAADAKTIFENTHIVRDLEEVEI</sequence>
<protein>
    <recommendedName>
        <fullName evidence="1">Ribonuclease Z</fullName>
        <shortName evidence="1">RNase Z</shortName>
        <ecNumber evidence="1">3.1.26.11</ecNumber>
    </recommendedName>
    <alternativeName>
        <fullName evidence="1">tRNA 3 endonuclease</fullName>
    </alternativeName>
    <alternativeName>
        <fullName evidence="1">tRNase Z</fullName>
    </alternativeName>
</protein>
<feature type="chain" id="PRO_0000155913" description="Ribonuclease Z">
    <location>
        <begin position="1"/>
        <end position="309"/>
    </location>
</feature>
<feature type="active site" description="Proton acceptor" evidence="1">
    <location>
        <position position="67"/>
    </location>
</feature>
<feature type="binding site" evidence="1">
    <location>
        <position position="63"/>
    </location>
    <ligand>
        <name>Zn(2+)</name>
        <dbReference type="ChEBI" id="CHEBI:29105"/>
        <label>1</label>
        <note>catalytic</note>
    </ligand>
</feature>
<feature type="binding site" evidence="1">
    <location>
        <position position="65"/>
    </location>
    <ligand>
        <name>Zn(2+)</name>
        <dbReference type="ChEBI" id="CHEBI:29105"/>
        <label>1</label>
        <note>catalytic</note>
    </ligand>
</feature>
<feature type="binding site" evidence="1">
    <location>
        <position position="67"/>
    </location>
    <ligand>
        <name>Zn(2+)</name>
        <dbReference type="ChEBI" id="CHEBI:29105"/>
        <label>2</label>
        <note>catalytic</note>
    </ligand>
</feature>
<feature type="binding site" evidence="1">
    <location>
        <position position="68"/>
    </location>
    <ligand>
        <name>Zn(2+)</name>
        <dbReference type="ChEBI" id="CHEBI:29105"/>
        <label>2</label>
        <note>catalytic</note>
    </ligand>
</feature>
<feature type="binding site" evidence="1">
    <location>
        <position position="145"/>
    </location>
    <ligand>
        <name>Zn(2+)</name>
        <dbReference type="ChEBI" id="CHEBI:29105"/>
        <label>1</label>
        <note>catalytic</note>
    </ligand>
</feature>
<feature type="binding site" evidence="1">
    <location>
        <position position="216"/>
    </location>
    <ligand>
        <name>Zn(2+)</name>
        <dbReference type="ChEBI" id="CHEBI:29105"/>
        <label>1</label>
        <note>catalytic</note>
    </ligand>
</feature>
<feature type="binding site" evidence="1">
    <location>
        <position position="216"/>
    </location>
    <ligand>
        <name>Zn(2+)</name>
        <dbReference type="ChEBI" id="CHEBI:29105"/>
        <label>2</label>
        <note>catalytic</note>
    </ligand>
</feature>
<feature type="binding site" evidence="1">
    <location>
        <position position="274"/>
    </location>
    <ligand>
        <name>Zn(2+)</name>
        <dbReference type="ChEBI" id="CHEBI:29105"/>
        <label>2</label>
        <note>catalytic</note>
    </ligand>
</feature>
<keyword id="KW-0255">Endonuclease</keyword>
<keyword id="KW-0378">Hydrolase</keyword>
<keyword id="KW-0479">Metal-binding</keyword>
<keyword id="KW-0540">Nuclease</keyword>
<keyword id="KW-1185">Reference proteome</keyword>
<keyword id="KW-0819">tRNA processing</keyword>
<keyword id="KW-0862">Zinc</keyword>
<organism>
    <name type="scientific">Streptococcus thermophilus (strain ATCC BAA-250 / LMG 18311)</name>
    <dbReference type="NCBI Taxonomy" id="264199"/>
    <lineage>
        <taxon>Bacteria</taxon>
        <taxon>Bacillati</taxon>
        <taxon>Bacillota</taxon>
        <taxon>Bacilli</taxon>
        <taxon>Lactobacillales</taxon>
        <taxon>Streptococcaceae</taxon>
        <taxon>Streptococcus</taxon>
    </lineage>
</organism>
<evidence type="ECO:0000255" key="1">
    <source>
        <dbReference type="HAMAP-Rule" id="MF_01818"/>
    </source>
</evidence>
<gene>
    <name evidence="1" type="primary">rnz</name>
    <name type="ordered locus">stu1226</name>
</gene>
<proteinExistence type="inferred from homology"/>